<sequence length="125" mass="13243">MAFPTTSAQQAETNRKILEDIQTKKQLLAGGIINLGLSNTNQMPSPQLLGQPTVAPEFLPQGVGLPTNATPPRSAFNPTSSTTLGFFIPQDSYFGNSFIPVLPRLEPLPTTTAPATTTASHIAPK</sequence>
<name>SOSSC_DROPS</name>
<accession>B5DRT7</accession>
<comment type="similarity">
    <text evidence="2">Belongs to the SOSS-C family.</text>
</comment>
<proteinExistence type="inferred from homology"/>
<dbReference type="EMBL" id="CH379070">
    <property type="protein sequence ID" value="EDY74198.1"/>
    <property type="molecule type" value="Genomic_DNA"/>
</dbReference>
<dbReference type="SMR" id="B5DRT7"/>
<dbReference type="FunCoup" id="B5DRT7">
    <property type="interactions" value="433"/>
</dbReference>
<dbReference type="STRING" id="46245.B5DRT7"/>
<dbReference type="EnsemblMetazoa" id="FBtr0288609">
    <property type="protein sequence ID" value="FBpp0287047"/>
    <property type="gene ID" value="FBgn0249989"/>
</dbReference>
<dbReference type="KEGG" id="dpo:6900242"/>
<dbReference type="eggNOG" id="KOG3420">
    <property type="taxonomic scope" value="Eukaryota"/>
</dbReference>
<dbReference type="HOGENOM" id="CLU_145773_0_0_1"/>
<dbReference type="InParanoid" id="B5DRT7"/>
<dbReference type="OMA" id="VMETQHM"/>
<dbReference type="Proteomes" id="UP000001819">
    <property type="component" value="Chromosome X"/>
</dbReference>
<dbReference type="Bgee" id="FBgn0249989">
    <property type="expression patterns" value="Expressed in female reproductive system and 2 other cell types or tissues"/>
</dbReference>
<dbReference type="GO" id="GO:0005654">
    <property type="term" value="C:nucleoplasm"/>
    <property type="evidence" value="ECO:0007669"/>
    <property type="project" value="TreeGrafter"/>
</dbReference>
<dbReference type="GO" id="GO:0070876">
    <property type="term" value="C:SOSS complex"/>
    <property type="evidence" value="ECO:0007669"/>
    <property type="project" value="InterPro"/>
</dbReference>
<dbReference type="GO" id="GO:0006281">
    <property type="term" value="P:DNA repair"/>
    <property type="evidence" value="ECO:0007669"/>
    <property type="project" value="InterPro"/>
</dbReference>
<dbReference type="InterPro" id="IPR031821">
    <property type="entry name" value="SOSSC"/>
</dbReference>
<dbReference type="PANTHER" id="PTHR31526">
    <property type="entry name" value="SOSS COMPLEX SUBUNIT C"/>
    <property type="match status" value="1"/>
</dbReference>
<dbReference type="PANTHER" id="PTHR31526:SF2">
    <property type="entry name" value="SOSS COMPLEX SUBUNIT C"/>
    <property type="match status" value="1"/>
</dbReference>
<dbReference type="Pfam" id="PF15925">
    <property type="entry name" value="SOSSC"/>
    <property type="match status" value="1"/>
</dbReference>
<gene>
    <name type="ORF">GA28629</name>
</gene>
<protein>
    <recommendedName>
        <fullName>SOSS complex subunit C homolog</fullName>
    </recommendedName>
</protein>
<feature type="chain" id="PRO_0000385325" description="SOSS complex subunit C homolog">
    <location>
        <begin position="1"/>
        <end position="125"/>
    </location>
</feature>
<feature type="region of interest" description="Disordered" evidence="1">
    <location>
        <begin position="43"/>
        <end position="77"/>
    </location>
</feature>
<feature type="compositionally biased region" description="Polar residues" evidence="1">
    <location>
        <begin position="67"/>
        <end position="77"/>
    </location>
</feature>
<organism>
    <name type="scientific">Drosophila pseudoobscura pseudoobscura</name>
    <name type="common">Fruit fly</name>
    <dbReference type="NCBI Taxonomy" id="46245"/>
    <lineage>
        <taxon>Eukaryota</taxon>
        <taxon>Metazoa</taxon>
        <taxon>Ecdysozoa</taxon>
        <taxon>Arthropoda</taxon>
        <taxon>Hexapoda</taxon>
        <taxon>Insecta</taxon>
        <taxon>Pterygota</taxon>
        <taxon>Neoptera</taxon>
        <taxon>Endopterygota</taxon>
        <taxon>Diptera</taxon>
        <taxon>Brachycera</taxon>
        <taxon>Muscomorpha</taxon>
        <taxon>Ephydroidea</taxon>
        <taxon>Drosophilidae</taxon>
        <taxon>Drosophila</taxon>
        <taxon>Sophophora</taxon>
    </lineage>
</organism>
<keyword id="KW-1185">Reference proteome</keyword>
<reference key="1">
    <citation type="journal article" date="2005" name="Genome Res.">
        <title>Comparative genome sequencing of Drosophila pseudoobscura: chromosomal, gene, and cis-element evolution.</title>
        <authorList>
            <person name="Richards S."/>
            <person name="Liu Y."/>
            <person name="Bettencourt B.R."/>
            <person name="Hradecky P."/>
            <person name="Letovsky S."/>
            <person name="Nielsen R."/>
            <person name="Thornton K."/>
            <person name="Hubisz M.J."/>
            <person name="Chen R."/>
            <person name="Meisel R.P."/>
            <person name="Couronne O."/>
            <person name="Hua S."/>
            <person name="Smith M.A."/>
            <person name="Zhang P."/>
            <person name="Liu J."/>
            <person name="Bussemaker H.J."/>
            <person name="van Batenburg M.F."/>
            <person name="Howells S.L."/>
            <person name="Scherer S.E."/>
            <person name="Sodergren E."/>
            <person name="Matthews B.B."/>
            <person name="Crosby M.A."/>
            <person name="Schroeder A.J."/>
            <person name="Ortiz-Barrientos D."/>
            <person name="Rives C.M."/>
            <person name="Metzker M.L."/>
            <person name="Muzny D.M."/>
            <person name="Scott G."/>
            <person name="Steffen D."/>
            <person name="Wheeler D.A."/>
            <person name="Worley K.C."/>
            <person name="Havlak P."/>
            <person name="Durbin K.J."/>
            <person name="Egan A."/>
            <person name="Gill R."/>
            <person name="Hume J."/>
            <person name="Morgan M.B."/>
            <person name="Miner G."/>
            <person name="Hamilton C."/>
            <person name="Huang Y."/>
            <person name="Waldron L."/>
            <person name="Verduzco D."/>
            <person name="Clerc-Blankenburg K.P."/>
            <person name="Dubchak I."/>
            <person name="Noor M.A.F."/>
            <person name="Anderson W."/>
            <person name="White K.P."/>
            <person name="Clark A.G."/>
            <person name="Schaeffer S.W."/>
            <person name="Gelbart W.M."/>
            <person name="Weinstock G.M."/>
            <person name="Gibbs R.A."/>
        </authorList>
    </citation>
    <scope>NUCLEOTIDE SEQUENCE [LARGE SCALE GENOMIC DNA]</scope>
    <source>
        <strain>MV2-25 / Tucson 14011-0121.94</strain>
    </source>
</reference>
<evidence type="ECO:0000256" key="1">
    <source>
        <dbReference type="SAM" id="MobiDB-lite"/>
    </source>
</evidence>
<evidence type="ECO:0000305" key="2"/>